<protein>
    <recommendedName>
        <fullName>Uncharacterized gene 67 protein</fullName>
    </recommendedName>
    <alternativeName>
        <fullName>IR6 protein</fullName>
    </alternativeName>
</protein>
<name>VG67_EHV1B</name>
<organismHost>
    <name type="scientific">Equus caballus</name>
    <name type="common">Horse</name>
    <dbReference type="NCBI Taxonomy" id="9796"/>
</organismHost>
<reference key="1">
    <citation type="journal article" date="1992" name="Virology">
        <title>The DNA sequence of equine herpesvirus-1.</title>
        <authorList>
            <person name="Telford E.A.R."/>
            <person name="Watson M.S."/>
            <person name="McBride K."/>
            <person name="Davison A.J."/>
        </authorList>
    </citation>
    <scope>NUCLEOTIDE SEQUENCE [LARGE SCALE GENOMIC DNA]</scope>
</reference>
<keyword id="KW-1185">Reference proteome</keyword>
<organism>
    <name type="scientific">Equine herpesvirus 1 (strain Ab4p)</name>
    <name type="common">EHV-1</name>
    <name type="synonym">Equine abortion virus</name>
    <dbReference type="NCBI Taxonomy" id="31520"/>
    <lineage>
        <taxon>Viruses</taxon>
        <taxon>Duplodnaviria</taxon>
        <taxon>Heunggongvirae</taxon>
        <taxon>Peploviricota</taxon>
        <taxon>Herviviricetes</taxon>
        <taxon>Herpesvirales</taxon>
        <taxon>Orthoherpesviridae</taxon>
        <taxon>Alphaherpesvirinae</taxon>
        <taxon>Varicellovirus</taxon>
        <taxon>Varicellovirus equidalpha1</taxon>
        <taxon>Equid alphaherpesvirus 1</taxon>
    </lineage>
</organism>
<gene>
    <name type="primary">IR6</name>
    <name type="ordered locus">67</name>
</gene>
<feature type="chain" id="PRO_0000116170" description="Uncharacterized gene 67 protein">
    <location>
        <begin position="1"/>
        <end position="272"/>
    </location>
</feature>
<feature type="region of interest" description="Disordered" evidence="1">
    <location>
        <begin position="238"/>
        <end position="272"/>
    </location>
</feature>
<feature type="compositionally biased region" description="Basic residues" evidence="1">
    <location>
        <begin position="249"/>
        <end position="258"/>
    </location>
</feature>
<accession>Q6LAQ8</accession>
<accession>P28984</accession>
<evidence type="ECO:0000256" key="1">
    <source>
        <dbReference type="SAM" id="MobiDB-lite"/>
    </source>
</evidence>
<sequence length="272" mass="30103">MNSDMMTAATAGTEVFRCALARRRNANPPHLVLAPTFAAAAAGGAANSSGEEAPRGERKHLFNPFGCMLGRSYFRRCREEMNEGYFAKVPTGYFPVAPSEVPCRVPVEGVVAGEVLSYSALPLPKIEKRFYKQLNDGTFVRLPFLYPEVYYEGEEEPADERYYIRADAADASSADPSTLPEEAFAKVPPAIAEGITNWQGPKRIPIPSERYVMKLGFEYQLHVTEDAFQEVNTSFMRLDLQSSPDPHPRGARQPRSRAHVSAENPEDTPVAV</sequence>
<dbReference type="EMBL" id="AY665713">
    <property type="protein sequence ID" value="AAT67324.1"/>
    <property type="molecule type" value="Genomic_DNA"/>
</dbReference>
<dbReference type="EMBL" id="AY665713">
    <property type="protein sequence ID" value="AAT67334.1"/>
    <property type="molecule type" value="Genomic_DNA"/>
</dbReference>
<dbReference type="PIR" id="D36802">
    <property type="entry name" value="D36802"/>
</dbReference>
<dbReference type="KEGG" id="vg:2948567"/>
<dbReference type="KEGG" id="vg:2948584"/>
<dbReference type="Proteomes" id="UP000001189">
    <property type="component" value="Segment"/>
</dbReference>
<dbReference type="InterPro" id="IPR010447">
    <property type="entry name" value="Herpes_IR6"/>
</dbReference>
<dbReference type="Pfam" id="PF06307">
    <property type="entry name" value="Herpes_IR6"/>
    <property type="match status" value="1"/>
</dbReference>
<proteinExistence type="predicted"/>